<feature type="chain" id="PRO_0000223959" description="SAM pointed domain-containing Ets transcription factor">
    <location>
        <begin position="1"/>
        <end position="325"/>
    </location>
</feature>
<feature type="domain" description="PNT" evidence="3">
    <location>
        <begin position="119"/>
        <end position="203"/>
    </location>
</feature>
<feature type="DNA-binding region" description="ETS" evidence="2">
    <location>
        <begin position="239"/>
        <end position="322"/>
    </location>
</feature>
<feature type="region of interest" description="Disordered" evidence="4">
    <location>
        <begin position="27"/>
        <end position="50"/>
    </location>
</feature>
<feature type="region of interest" description="Disordered" evidence="4">
    <location>
        <begin position="79"/>
        <end position="100"/>
    </location>
</feature>
<protein>
    <recommendedName>
        <fullName>SAM pointed domain-containing Ets transcription factor</fullName>
    </recommendedName>
    <alternativeName>
        <fullName>Prostate epithelium-specific Ets transcription factor</fullName>
        <shortName>Prostate-specific Ets</shortName>
    </alternativeName>
    <alternativeName>
        <fullName>Prostate-derived Ets factor</fullName>
    </alternativeName>
</protein>
<organism>
    <name type="scientific">Mus musculus</name>
    <name type="common">Mouse</name>
    <dbReference type="NCBI Taxonomy" id="10090"/>
    <lineage>
        <taxon>Eukaryota</taxon>
        <taxon>Metazoa</taxon>
        <taxon>Chordata</taxon>
        <taxon>Craniata</taxon>
        <taxon>Vertebrata</taxon>
        <taxon>Euteleostomi</taxon>
        <taxon>Mammalia</taxon>
        <taxon>Eutheria</taxon>
        <taxon>Euarchontoglires</taxon>
        <taxon>Glires</taxon>
        <taxon>Rodentia</taxon>
        <taxon>Myomorpha</taxon>
        <taxon>Muroidea</taxon>
        <taxon>Muridae</taxon>
        <taxon>Murinae</taxon>
        <taxon>Mus</taxon>
        <taxon>Mus</taxon>
    </lineage>
</organism>
<gene>
    <name type="primary">Spdef</name>
    <name type="synonym">Pdef</name>
    <name type="synonym">Pse</name>
</gene>
<sequence>MGSASPGLSNVSPGCLLLFPDVAPRTGTEKAASGAMGPEKQEWSPSPPATPEQGLSAFYLSYFNMYPDDSSWVAKVPEARAGEDHPEEPEQCPVIDSQASGSTLDEHSLEQVQSMVVGEVLKDIETACKLLNITADPGDWSPGNVQKWLLWTEHQYRLPPAGKAFQELGGKELCAMSEEQFRQRAPLGGDVLHAHLDIWKSAAWMKERTSPGTLHYCASTSEEGWTDGEVDSSCSGQPIHLWQFLKELLLKPHSYGRFIRWLNKEKGIFKIEDSAQVARLWGVRKNRPAMNYDKLSRSIRQYYKKGIIRKPDISQRLVYQFVHPV</sequence>
<proteinExistence type="evidence at transcript level"/>
<name>SPDEF_MOUSE</name>
<reference key="1">
    <citation type="journal article" date="2000" name="Gene">
        <title>Cloning and expression of the mouse Pse gene encoding a novel Ets family member.</title>
        <authorList>
            <person name="Yamada N."/>
            <person name="Tamai Y."/>
            <person name="Miyamoto H."/>
            <person name="Nozaki M."/>
        </authorList>
    </citation>
    <scope>NUCLEOTIDE SEQUENCE [MRNA]</scope>
    <scope>FUNCTION</scope>
    <scope>TISSUE SPECIFICITY</scope>
    <source>
        <strain>C57BL/6J</strain>
        <tissue>Colon</tissue>
    </source>
</reference>
<reference key="2">
    <citation type="journal article" date="2005" name="Science">
        <title>The transcriptional landscape of the mammalian genome.</title>
        <authorList>
            <person name="Carninci P."/>
            <person name="Kasukawa T."/>
            <person name="Katayama S."/>
            <person name="Gough J."/>
            <person name="Frith M.C."/>
            <person name="Maeda N."/>
            <person name="Oyama R."/>
            <person name="Ravasi T."/>
            <person name="Lenhard B."/>
            <person name="Wells C."/>
            <person name="Kodzius R."/>
            <person name="Shimokawa K."/>
            <person name="Bajic V.B."/>
            <person name="Brenner S.E."/>
            <person name="Batalov S."/>
            <person name="Forrest A.R."/>
            <person name="Zavolan M."/>
            <person name="Davis M.J."/>
            <person name="Wilming L.G."/>
            <person name="Aidinis V."/>
            <person name="Allen J.E."/>
            <person name="Ambesi-Impiombato A."/>
            <person name="Apweiler R."/>
            <person name="Aturaliya R.N."/>
            <person name="Bailey T.L."/>
            <person name="Bansal M."/>
            <person name="Baxter L."/>
            <person name="Beisel K.W."/>
            <person name="Bersano T."/>
            <person name="Bono H."/>
            <person name="Chalk A.M."/>
            <person name="Chiu K.P."/>
            <person name="Choudhary V."/>
            <person name="Christoffels A."/>
            <person name="Clutterbuck D.R."/>
            <person name="Crowe M.L."/>
            <person name="Dalla E."/>
            <person name="Dalrymple B.P."/>
            <person name="de Bono B."/>
            <person name="Della Gatta G."/>
            <person name="di Bernardo D."/>
            <person name="Down T."/>
            <person name="Engstrom P."/>
            <person name="Fagiolini M."/>
            <person name="Faulkner G."/>
            <person name="Fletcher C.F."/>
            <person name="Fukushima T."/>
            <person name="Furuno M."/>
            <person name="Futaki S."/>
            <person name="Gariboldi M."/>
            <person name="Georgii-Hemming P."/>
            <person name="Gingeras T.R."/>
            <person name="Gojobori T."/>
            <person name="Green R.E."/>
            <person name="Gustincich S."/>
            <person name="Harbers M."/>
            <person name="Hayashi Y."/>
            <person name="Hensch T.K."/>
            <person name="Hirokawa N."/>
            <person name="Hill D."/>
            <person name="Huminiecki L."/>
            <person name="Iacono M."/>
            <person name="Ikeo K."/>
            <person name="Iwama A."/>
            <person name="Ishikawa T."/>
            <person name="Jakt M."/>
            <person name="Kanapin A."/>
            <person name="Katoh M."/>
            <person name="Kawasawa Y."/>
            <person name="Kelso J."/>
            <person name="Kitamura H."/>
            <person name="Kitano H."/>
            <person name="Kollias G."/>
            <person name="Krishnan S.P."/>
            <person name="Kruger A."/>
            <person name="Kummerfeld S.K."/>
            <person name="Kurochkin I.V."/>
            <person name="Lareau L.F."/>
            <person name="Lazarevic D."/>
            <person name="Lipovich L."/>
            <person name="Liu J."/>
            <person name="Liuni S."/>
            <person name="McWilliam S."/>
            <person name="Madan Babu M."/>
            <person name="Madera M."/>
            <person name="Marchionni L."/>
            <person name="Matsuda H."/>
            <person name="Matsuzawa S."/>
            <person name="Miki H."/>
            <person name="Mignone F."/>
            <person name="Miyake S."/>
            <person name="Morris K."/>
            <person name="Mottagui-Tabar S."/>
            <person name="Mulder N."/>
            <person name="Nakano N."/>
            <person name="Nakauchi H."/>
            <person name="Ng P."/>
            <person name="Nilsson R."/>
            <person name="Nishiguchi S."/>
            <person name="Nishikawa S."/>
            <person name="Nori F."/>
            <person name="Ohara O."/>
            <person name="Okazaki Y."/>
            <person name="Orlando V."/>
            <person name="Pang K.C."/>
            <person name="Pavan W.J."/>
            <person name="Pavesi G."/>
            <person name="Pesole G."/>
            <person name="Petrovsky N."/>
            <person name="Piazza S."/>
            <person name="Reed J."/>
            <person name="Reid J.F."/>
            <person name="Ring B.Z."/>
            <person name="Ringwald M."/>
            <person name="Rost B."/>
            <person name="Ruan Y."/>
            <person name="Salzberg S.L."/>
            <person name="Sandelin A."/>
            <person name="Schneider C."/>
            <person name="Schoenbach C."/>
            <person name="Sekiguchi K."/>
            <person name="Semple C.A."/>
            <person name="Seno S."/>
            <person name="Sessa L."/>
            <person name="Sheng Y."/>
            <person name="Shibata Y."/>
            <person name="Shimada H."/>
            <person name="Shimada K."/>
            <person name="Silva D."/>
            <person name="Sinclair B."/>
            <person name="Sperling S."/>
            <person name="Stupka E."/>
            <person name="Sugiura K."/>
            <person name="Sultana R."/>
            <person name="Takenaka Y."/>
            <person name="Taki K."/>
            <person name="Tammoja K."/>
            <person name="Tan S.L."/>
            <person name="Tang S."/>
            <person name="Taylor M.S."/>
            <person name="Tegner J."/>
            <person name="Teichmann S.A."/>
            <person name="Ueda H.R."/>
            <person name="van Nimwegen E."/>
            <person name="Verardo R."/>
            <person name="Wei C.L."/>
            <person name="Yagi K."/>
            <person name="Yamanishi H."/>
            <person name="Zabarovsky E."/>
            <person name="Zhu S."/>
            <person name="Zimmer A."/>
            <person name="Hide W."/>
            <person name="Bult C."/>
            <person name="Grimmond S.M."/>
            <person name="Teasdale R.D."/>
            <person name="Liu E.T."/>
            <person name="Brusic V."/>
            <person name="Quackenbush J."/>
            <person name="Wahlestedt C."/>
            <person name="Mattick J.S."/>
            <person name="Hume D.A."/>
            <person name="Kai C."/>
            <person name="Sasaki D."/>
            <person name="Tomaru Y."/>
            <person name="Fukuda S."/>
            <person name="Kanamori-Katayama M."/>
            <person name="Suzuki M."/>
            <person name="Aoki J."/>
            <person name="Arakawa T."/>
            <person name="Iida J."/>
            <person name="Imamura K."/>
            <person name="Itoh M."/>
            <person name="Kato T."/>
            <person name="Kawaji H."/>
            <person name="Kawagashira N."/>
            <person name="Kawashima T."/>
            <person name="Kojima M."/>
            <person name="Kondo S."/>
            <person name="Konno H."/>
            <person name="Nakano K."/>
            <person name="Ninomiya N."/>
            <person name="Nishio T."/>
            <person name="Okada M."/>
            <person name="Plessy C."/>
            <person name="Shibata K."/>
            <person name="Shiraki T."/>
            <person name="Suzuki S."/>
            <person name="Tagami M."/>
            <person name="Waki K."/>
            <person name="Watahiki A."/>
            <person name="Okamura-Oho Y."/>
            <person name="Suzuki H."/>
            <person name="Kawai J."/>
            <person name="Hayashizaki Y."/>
        </authorList>
    </citation>
    <scope>NUCLEOTIDE SEQUENCE [LARGE SCALE MRNA]</scope>
    <source>
        <strain>C57BL/6J</strain>
        <tissue>Colon</tissue>
    </source>
</reference>
<reference key="3">
    <citation type="journal article" date="2004" name="Genome Res.">
        <title>The status, quality, and expansion of the NIH full-length cDNA project: the Mammalian Gene Collection (MGC).</title>
        <authorList>
            <consortium name="The MGC Project Team"/>
        </authorList>
    </citation>
    <scope>NUCLEOTIDE SEQUENCE [LARGE SCALE MRNA]</scope>
    <source>
        <strain>FVB/N</strain>
        <tissue>Colon</tissue>
    </source>
</reference>
<evidence type="ECO:0000250" key="1"/>
<evidence type="ECO:0000255" key="2">
    <source>
        <dbReference type="PROSITE-ProRule" id="PRU00237"/>
    </source>
</evidence>
<evidence type="ECO:0000255" key="3">
    <source>
        <dbReference type="PROSITE-ProRule" id="PRU00762"/>
    </source>
</evidence>
<evidence type="ECO:0000256" key="4">
    <source>
        <dbReference type="SAM" id="MobiDB-lite"/>
    </source>
</evidence>
<evidence type="ECO:0000269" key="5">
    <source>
    </source>
</evidence>
<evidence type="ECO:0000305" key="6"/>
<dbReference type="EMBL" id="AB019436">
    <property type="protein sequence ID" value="BAA77329.1"/>
    <property type="molecule type" value="mRNA"/>
</dbReference>
<dbReference type="EMBL" id="AK078863">
    <property type="protein sequence ID" value="BAC37426.1"/>
    <property type="molecule type" value="mRNA"/>
</dbReference>
<dbReference type="EMBL" id="BC012648">
    <property type="protein sequence ID" value="AAH12648.1"/>
    <property type="molecule type" value="mRNA"/>
</dbReference>
<dbReference type="CCDS" id="CCDS28568.1"/>
<dbReference type="RefSeq" id="NP_001344657.1">
    <property type="nucleotide sequence ID" value="NM_001357728.1"/>
</dbReference>
<dbReference type="RefSeq" id="NP_001401206.1">
    <property type="nucleotide sequence ID" value="NM_001414277.1"/>
</dbReference>
<dbReference type="RefSeq" id="NP_001401207.1">
    <property type="nucleotide sequence ID" value="NM_001414278.1"/>
</dbReference>
<dbReference type="RefSeq" id="NP_038919.1">
    <property type="nucleotide sequence ID" value="NM_013891.4"/>
</dbReference>
<dbReference type="RefSeq" id="XP_006524442.1">
    <property type="nucleotide sequence ID" value="XM_006524379.5"/>
</dbReference>
<dbReference type="RefSeq" id="XP_006524443.1">
    <property type="nucleotide sequence ID" value="XM_006524380.5"/>
</dbReference>
<dbReference type="RefSeq" id="XP_006524444.1">
    <property type="nucleotide sequence ID" value="XM_006524381.5"/>
</dbReference>
<dbReference type="RefSeq" id="XP_017172988.1">
    <property type="nucleotide sequence ID" value="XM_017317499.1"/>
</dbReference>
<dbReference type="SMR" id="Q9WTP3"/>
<dbReference type="BioGRID" id="205953">
    <property type="interactions" value="2"/>
</dbReference>
<dbReference type="FunCoup" id="Q9WTP3">
    <property type="interactions" value="1042"/>
</dbReference>
<dbReference type="IntAct" id="Q9WTP3">
    <property type="interactions" value="1"/>
</dbReference>
<dbReference type="STRING" id="10090.ENSMUSP00000025054"/>
<dbReference type="GlyGen" id="Q9WTP3">
    <property type="glycosylation" value="1 site"/>
</dbReference>
<dbReference type="PhosphoSitePlus" id="Q9WTP3"/>
<dbReference type="PaxDb" id="10090-ENSMUSP00000110520"/>
<dbReference type="ProteomicsDB" id="261127"/>
<dbReference type="Antibodypedia" id="15077">
    <property type="antibodies" value="210 antibodies from 30 providers"/>
</dbReference>
<dbReference type="DNASU" id="30051"/>
<dbReference type="Ensembl" id="ENSMUST00000025054.10">
    <property type="protein sequence ID" value="ENSMUSP00000025054.3"/>
    <property type="gene ID" value="ENSMUSG00000024215.16"/>
</dbReference>
<dbReference type="GeneID" id="30051"/>
<dbReference type="KEGG" id="mmu:30051"/>
<dbReference type="UCSC" id="uc008bpo.2">
    <property type="organism name" value="mouse"/>
</dbReference>
<dbReference type="AGR" id="MGI:1353422"/>
<dbReference type="CTD" id="25803"/>
<dbReference type="MGI" id="MGI:1353422">
    <property type="gene designation" value="Spdef"/>
</dbReference>
<dbReference type="VEuPathDB" id="HostDB:ENSMUSG00000024215"/>
<dbReference type="eggNOG" id="KOG3805">
    <property type="taxonomic scope" value="Eukaryota"/>
</dbReference>
<dbReference type="GeneTree" id="ENSGT00940000157549"/>
<dbReference type="HOGENOM" id="CLU_877059_0_0_1"/>
<dbReference type="InParanoid" id="Q9WTP3"/>
<dbReference type="OMA" id="VHYCAST"/>
<dbReference type="OrthoDB" id="10057999at2759"/>
<dbReference type="PhylomeDB" id="Q9WTP3"/>
<dbReference type="TreeFam" id="TF318679"/>
<dbReference type="BioGRID-ORCS" id="30051">
    <property type="hits" value="3 hits in 81 CRISPR screens"/>
</dbReference>
<dbReference type="PRO" id="PR:Q9WTP3"/>
<dbReference type="Proteomes" id="UP000000589">
    <property type="component" value="Chromosome 17"/>
</dbReference>
<dbReference type="RNAct" id="Q9WTP3">
    <property type="molecule type" value="protein"/>
</dbReference>
<dbReference type="Bgee" id="ENSMUSG00000024215">
    <property type="expression patterns" value="Expressed in crypt of Lieberkuhn of small intestine and 80 other cell types or tissues"/>
</dbReference>
<dbReference type="ExpressionAtlas" id="Q9WTP3">
    <property type="expression patterns" value="baseline and differential"/>
</dbReference>
<dbReference type="GO" id="GO:0005634">
    <property type="term" value="C:nucleus"/>
    <property type="evidence" value="ECO:0000314"/>
    <property type="project" value="MGI"/>
</dbReference>
<dbReference type="GO" id="GO:0003700">
    <property type="term" value="F:DNA-binding transcription factor activity"/>
    <property type="evidence" value="ECO:0007669"/>
    <property type="project" value="InterPro"/>
</dbReference>
<dbReference type="GO" id="GO:1990837">
    <property type="term" value="F:sequence-specific double-stranded DNA binding"/>
    <property type="evidence" value="ECO:0007669"/>
    <property type="project" value="Ensembl"/>
</dbReference>
<dbReference type="GO" id="GO:0045165">
    <property type="term" value="P:cell fate commitment"/>
    <property type="evidence" value="ECO:0000315"/>
    <property type="project" value="MGI"/>
</dbReference>
<dbReference type="GO" id="GO:0072148">
    <property type="term" value="P:epithelial cell fate commitment"/>
    <property type="evidence" value="ECO:0000315"/>
    <property type="project" value="MGI"/>
</dbReference>
<dbReference type="GO" id="GO:0002068">
    <property type="term" value="P:glandular epithelial cell development"/>
    <property type="evidence" value="ECO:0000315"/>
    <property type="project" value="MGI"/>
</dbReference>
<dbReference type="GO" id="GO:0060576">
    <property type="term" value="P:intestinal epithelial cell development"/>
    <property type="evidence" value="ECO:0000315"/>
    <property type="project" value="MGI"/>
</dbReference>
<dbReference type="GO" id="GO:0060480">
    <property type="term" value="P:lung goblet cell differentiation"/>
    <property type="evidence" value="ECO:0000314"/>
    <property type="project" value="MGI"/>
</dbReference>
<dbReference type="GO" id="GO:0010454">
    <property type="term" value="P:negative regulation of cell fate commitment"/>
    <property type="evidence" value="ECO:0000315"/>
    <property type="project" value="MGI"/>
</dbReference>
<dbReference type="GO" id="GO:0000122">
    <property type="term" value="P:negative regulation of transcription by RNA polymerase II"/>
    <property type="evidence" value="ECO:0000314"/>
    <property type="project" value="MGI"/>
</dbReference>
<dbReference type="GO" id="GO:0043065">
    <property type="term" value="P:positive regulation of apoptotic process"/>
    <property type="evidence" value="ECO:0007669"/>
    <property type="project" value="Ensembl"/>
</dbReference>
<dbReference type="GO" id="GO:0010455">
    <property type="term" value="P:positive regulation of cell fate commitment"/>
    <property type="evidence" value="ECO:0000315"/>
    <property type="project" value="MGI"/>
</dbReference>
<dbReference type="GO" id="GO:0045944">
    <property type="term" value="P:positive regulation of transcription by RNA polymerase II"/>
    <property type="evidence" value="ECO:0000314"/>
    <property type="project" value="MGI"/>
</dbReference>
<dbReference type="GO" id="GO:0006366">
    <property type="term" value="P:transcription by RNA polymerase II"/>
    <property type="evidence" value="ECO:0000314"/>
    <property type="project" value="MGI"/>
</dbReference>
<dbReference type="CDD" id="cd08532">
    <property type="entry name" value="SAM_PNT-PDEF-like"/>
    <property type="match status" value="1"/>
</dbReference>
<dbReference type="FunFam" id="1.10.150.50:FF:000050">
    <property type="entry name" value="SAM pointed domain containing ETS transcription factor"/>
    <property type="match status" value="1"/>
</dbReference>
<dbReference type="FunFam" id="1.10.10.10:FF:000220">
    <property type="entry name" value="SAM pointed domain-containing Ets transcription factor"/>
    <property type="match status" value="1"/>
</dbReference>
<dbReference type="Gene3D" id="1.10.150.50">
    <property type="entry name" value="Transcription Factor, Ets-1"/>
    <property type="match status" value="1"/>
</dbReference>
<dbReference type="Gene3D" id="1.10.10.10">
    <property type="entry name" value="Winged helix-like DNA-binding domain superfamily/Winged helix DNA-binding domain"/>
    <property type="match status" value="1"/>
</dbReference>
<dbReference type="InterPro" id="IPR000418">
    <property type="entry name" value="Ets_dom"/>
</dbReference>
<dbReference type="InterPro" id="IPR046328">
    <property type="entry name" value="ETS_fam"/>
</dbReference>
<dbReference type="InterPro" id="IPR003118">
    <property type="entry name" value="Pointed_dom"/>
</dbReference>
<dbReference type="InterPro" id="IPR013761">
    <property type="entry name" value="SAM/pointed_sf"/>
</dbReference>
<dbReference type="InterPro" id="IPR036388">
    <property type="entry name" value="WH-like_DNA-bd_sf"/>
</dbReference>
<dbReference type="InterPro" id="IPR036390">
    <property type="entry name" value="WH_DNA-bd_sf"/>
</dbReference>
<dbReference type="PANTHER" id="PTHR11849">
    <property type="entry name" value="ETS"/>
    <property type="match status" value="1"/>
</dbReference>
<dbReference type="PANTHER" id="PTHR11849:SF182">
    <property type="entry name" value="SAM POINTED DOMAIN-CONTAINING ETS TRANSCRIPTION FACTOR"/>
    <property type="match status" value="1"/>
</dbReference>
<dbReference type="Pfam" id="PF00178">
    <property type="entry name" value="Ets"/>
    <property type="match status" value="1"/>
</dbReference>
<dbReference type="Pfam" id="PF02198">
    <property type="entry name" value="SAM_PNT"/>
    <property type="match status" value="1"/>
</dbReference>
<dbReference type="PRINTS" id="PR00454">
    <property type="entry name" value="ETSDOMAIN"/>
</dbReference>
<dbReference type="SMART" id="SM00413">
    <property type="entry name" value="ETS"/>
    <property type="match status" value="1"/>
</dbReference>
<dbReference type="SMART" id="SM00251">
    <property type="entry name" value="SAM_PNT"/>
    <property type="match status" value="1"/>
</dbReference>
<dbReference type="SUPFAM" id="SSF47769">
    <property type="entry name" value="SAM/Pointed domain"/>
    <property type="match status" value="1"/>
</dbReference>
<dbReference type="SUPFAM" id="SSF46785">
    <property type="entry name" value="Winged helix' DNA-binding domain"/>
    <property type="match status" value="1"/>
</dbReference>
<dbReference type="PROSITE" id="PS00345">
    <property type="entry name" value="ETS_DOMAIN_1"/>
    <property type="match status" value="1"/>
</dbReference>
<dbReference type="PROSITE" id="PS00346">
    <property type="entry name" value="ETS_DOMAIN_2"/>
    <property type="match status" value="1"/>
</dbReference>
<dbReference type="PROSITE" id="PS50061">
    <property type="entry name" value="ETS_DOMAIN_3"/>
    <property type="match status" value="1"/>
</dbReference>
<dbReference type="PROSITE" id="PS51433">
    <property type="entry name" value="PNT"/>
    <property type="match status" value="1"/>
</dbReference>
<comment type="function">
    <text evidence="1 5">May function as an androgen-independent transactivator of the prostate-specific antigen (PSA) promoter. Binds to 5'-GGAT-3' DNA sequences. May play a role in the regulation of the prostate gland and/or prostate cancer development. Acts as a transcriptional activator for SERPINB5 promoter (By similarity).</text>
</comment>
<comment type="subunit">
    <text evidence="1">Interacts with the DNA-binding domain of the androgen receptor. Interacts with NKX3-1 (By similarity).</text>
</comment>
<comment type="subcellular location">
    <subcellularLocation>
        <location evidence="6">Nucleus</location>
    </subcellularLocation>
</comment>
<comment type="tissue specificity">
    <text evidence="5">Expressed in the accessory glands of sex organs including the prostate, seminal vesicle, coagulating gland in males, the oviduct in females, and in intestines. Expression is epithelial-specific.</text>
</comment>
<comment type="similarity">
    <text evidence="6">Belongs to the ETS family.</text>
</comment>
<accession>Q9WTP3</accession>
<keyword id="KW-0010">Activator</keyword>
<keyword id="KW-0238">DNA-binding</keyword>
<keyword id="KW-0539">Nucleus</keyword>
<keyword id="KW-1185">Reference proteome</keyword>
<keyword id="KW-0804">Transcription</keyword>
<keyword id="KW-0805">Transcription regulation</keyword>